<name>DLTC_STREM</name>
<evidence type="ECO:0000255" key="1">
    <source>
        <dbReference type="HAMAP-Rule" id="MF_00565"/>
    </source>
</evidence>
<comment type="function">
    <text evidence="1">Carrier protein involved in the D-alanylation of lipoteichoic acid (LTA). The loading of thioester-linked D-alanine onto DltC is catalyzed by D-alanine--D-alanyl carrier protein ligase DltA. The DltC-carried D-alanyl group is further transferred to cell membrane phosphatidylglycerol (PG) by forming an ester bond, probably catalyzed by DltD. D-alanylation of LTA plays an important role in modulating the properties of the cell wall in Gram-positive bacteria, influencing the net charge of the cell wall.</text>
</comment>
<comment type="pathway">
    <text evidence="1">Cell wall biogenesis; lipoteichoic acid biosynthesis.</text>
</comment>
<comment type="subcellular location">
    <subcellularLocation>
        <location evidence="1">Cytoplasm</location>
    </subcellularLocation>
</comment>
<comment type="PTM">
    <text evidence="1">4'-phosphopantetheine is transferred from CoA to a specific serine of apo-DCP.</text>
</comment>
<comment type="similarity">
    <text evidence="1">Belongs to the DltC family.</text>
</comment>
<feature type="chain" id="PRO_1000129401" description="D-alanyl carrier protein">
    <location>
        <begin position="1"/>
        <end position="79"/>
    </location>
</feature>
<feature type="domain" description="Carrier" evidence="1">
    <location>
        <begin position="1"/>
        <end position="77"/>
    </location>
</feature>
<feature type="modified residue" description="O-(pantetheine 4'-phosphoryl)serine" evidence="1">
    <location>
        <position position="35"/>
    </location>
</feature>
<keyword id="KW-0961">Cell wall biogenesis/degradation</keyword>
<keyword id="KW-0963">Cytoplasm</keyword>
<keyword id="KW-0596">Phosphopantetheine</keyword>
<keyword id="KW-0597">Phosphoprotein</keyword>
<organism>
    <name type="scientific">Streptococcus equi subsp. zooepidemicus (strain MGCS10565)</name>
    <dbReference type="NCBI Taxonomy" id="552526"/>
    <lineage>
        <taxon>Bacteria</taxon>
        <taxon>Bacillati</taxon>
        <taxon>Bacillota</taxon>
        <taxon>Bacilli</taxon>
        <taxon>Lactobacillales</taxon>
        <taxon>Streptococcaceae</taxon>
        <taxon>Streptococcus</taxon>
    </lineage>
</organism>
<sequence length="79" mass="9008">MSTKETVIDLFDRLFMEDVSDMMDEDLFDAGVLDSLGTVELIVEIESIFNIKVPISEFGREDWNTANKIIQGIEELQHA</sequence>
<proteinExistence type="inferred from homology"/>
<accession>B4U3P0</accession>
<reference key="1">
    <citation type="journal article" date="2008" name="PLoS ONE">
        <title>Genome sequence of a lancefield group C Streptococcus zooepidemicus strain causing epidemic nephritis: new information about an old disease.</title>
        <authorList>
            <person name="Beres S.B."/>
            <person name="Sesso R."/>
            <person name="Pinto S.W.L."/>
            <person name="Hoe N.P."/>
            <person name="Porcella S.F."/>
            <person name="Deleo F.R."/>
            <person name="Musser J.M."/>
        </authorList>
    </citation>
    <scope>NUCLEOTIDE SEQUENCE [LARGE SCALE GENOMIC DNA]</scope>
    <source>
        <strain>MGCS10565</strain>
    </source>
</reference>
<gene>
    <name evidence="1" type="primary">dltC</name>
    <name type="ordered locus">Sez_1269</name>
</gene>
<protein>
    <recommendedName>
        <fullName evidence="1">D-alanyl carrier protein</fullName>
        <shortName evidence="1">DCP</shortName>
    </recommendedName>
    <alternativeName>
        <fullName evidence="1">D-alanine--poly(phosphoribitol) ligase subunit 2</fullName>
    </alternativeName>
</protein>
<dbReference type="EMBL" id="CP001129">
    <property type="protein sequence ID" value="ACG62607.1"/>
    <property type="molecule type" value="Genomic_DNA"/>
</dbReference>
<dbReference type="RefSeq" id="WP_012515872.1">
    <property type="nucleotide sequence ID" value="NC_011134.1"/>
</dbReference>
<dbReference type="SMR" id="B4U3P0"/>
<dbReference type="GeneID" id="83705151"/>
<dbReference type="KEGG" id="sez:Sez_1269"/>
<dbReference type="HOGENOM" id="CLU_108696_19_0_9"/>
<dbReference type="UniPathway" id="UPA00556"/>
<dbReference type="Proteomes" id="UP000001873">
    <property type="component" value="Chromosome"/>
</dbReference>
<dbReference type="GO" id="GO:0005737">
    <property type="term" value="C:cytoplasm"/>
    <property type="evidence" value="ECO:0007669"/>
    <property type="project" value="UniProtKB-SubCell"/>
</dbReference>
<dbReference type="GO" id="GO:0036370">
    <property type="term" value="F:D-alanyl carrier activity"/>
    <property type="evidence" value="ECO:0007669"/>
    <property type="project" value="UniProtKB-UniRule"/>
</dbReference>
<dbReference type="GO" id="GO:0071555">
    <property type="term" value="P:cell wall organization"/>
    <property type="evidence" value="ECO:0007669"/>
    <property type="project" value="UniProtKB-KW"/>
</dbReference>
<dbReference type="GO" id="GO:0070395">
    <property type="term" value="P:lipoteichoic acid biosynthetic process"/>
    <property type="evidence" value="ECO:0007669"/>
    <property type="project" value="UniProtKB-UniRule"/>
</dbReference>
<dbReference type="Gene3D" id="1.10.1200.10">
    <property type="entry name" value="ACP-like"/>
    <property type="match status" value="1"/>
</dbReference>
<dbReference type="HAMAP" id="MF_00565">
    <property type="entry name" value="DltC"/>
    <property type="match status" value="1"/>
</dbReference>
<dbReference type="InterPro" id="IPR036736">
    <property type="entry name" value="ACP-like_sf"/>
</dbReference>
<dbReference type="InterPro" id="IPR003230">
    <property type="entry name" value="DltC"/>
</dbReference>
<dbReference type="InterPro" id="IPR009081">
    <property type="entry name" value="PP-bd_ACP"/>
</dbReference>
<dbReference type="NCBIfam" id="TIGR01688">
    <property type="entry name" value="dltC"/>
    <property type="match status" value="1"/>
</dbReference>
<dbReference type="NCBIfam" id="NF003464">
    <property type="entry name" value="PRK05087.1"/>
    <property type="match status" value="1"/>
</dbReference>
<dbReference type="Pfam" id="PF00550">
    <property type="entry name" value="PP-binding"/>
    <property type="match status" value="1"/>
</dbReference>
<dbReference type="SUPFAM" id="SSF47336">
    <property type="entry name" value="ACP-like"/>
    <property type="match status" value="1"/>
</dbReference>
<dbReference type="PROSITE" id="PS50075">
    <property type="entry name" value="CARRIER"/>
    <property type="match status" value="1"/>
</dbReference>